<reference key="1">
    <citation type="journal article" date="2010" name="PLoS ONE">
        <title>Genome sequence of Cronobacter sakazakii BAA-894 and comparative genomic hybridization analysis with other Cronobacter species.</title>
        <authorList>
            <person name="Kucerova E."/>
            <person name="Clifton S.W."/>
            <person name="Xia X.Q."/>
            <person name="Long F."/>
            <person name="Porwollik S."/>
            <person name="Fulton L."/>
            <person name="Fronick C."/>
            <person name="Minx P."/>
            <person name="Kyung K."/>
            <person name="Warren W."/>
            <person name="Fulton R."/>
            <person name="Feng D."/>
            <person name="Wollam A."/>
            <person name="Shah N."/>
            <person name="Bhonagiri V."/>
            <person name="Nash W.E."/>
            <person name="Hallsworth-Pepin K."/>
            <person name="Wilson R.K."/>
            <person name="McClelland M."/>
            <person name="Forsythe S.J."/>
        </authorList>
    </citation>
    <scope>NUCLEOTIDE SEQUENCE [LARGE SCALE GENOMIC DNA]</scope>
    <source>
        <strain>ATCC BAA-894</strain>
    </source>
</reference>
<gene>
    <name evidence="1" type="primary">pgl</name>
    <name type="ordered locus">ESA_02577</name>
</gene>
<feature type="chain" id="PRO_1000069411" description="6-phosphogluconolactonase">
    <location>
        <begin position="1"/>
        <end position="333"/>
    </location>
</feature>
<comment type="function">
    <text evidence="1">Catalyzes the hydrolysis of 6-phosphogluconolactone to 6-phosphogluconate.</text>
</comment>
<comment type="catalytic activity">
    <reaction evidence="1">
        <text>6-phospho-D-glucono-1,5-lactone + H2O = 6-phospho-D-gluconate + H(+)</text>
        <dbReference type="Rhea" id="RHEA:12556"/>
        <dbReference type="ChEBI" id="CHEBI:15377"/>
        <dbReference type="ChEBI" id="CHEBI:15378"/>
        <dbReference type="ChEBI" id="CHEBI:57955"/>
        <dbReference type="ChEBI" id="CHEBI:58759"/>
        <dbReference type="EC" id="3.1.1.31"/>
    </reaction>
</comment>
<comment type="pathway">
    <text evidence="1">Carbohydrate degradation; pentose phosphate pathway; D-ribulose 5-phosphate from D-glucose 6-phosphate (oxidative stage): step 2/3.</text>
</comment>
<comment type="similarity">
    <text evidence="1">Belongs to the cycloisomerase 2 family.</text>
</comment>
<protein>
    <recommendedName>
        <fullName evidence="1">6-phosphogluconolactonase</fullName>
        <shortName evidence="1">6-P-gluconolactonase</shortName>
        <ecNumber evidence="1">3.1.1.31</ecNumber>
    </recommendedName>
</protein>
<sequence length="333" mass="36107">MKQTVYTASPESQQIHVWRLEPQGTLTLLQVVDAPGQVQPMVISPDKRFLYVGVRPEFRVIAYRIAAHDGTLSEAGEAPLPGSPTHISTDHTGRFLFSGSYNAGSVSVVRLNDGLPGETVTVVEGLEGCHSANISPDNRTLWVPALKQDRICLFTLTDDGHLEPQTPAEVTTVAGAGPRHMVFHPSKPFAYCVNELNSSVDVWALSDPHGNIECVQTLDMMPADFSDTRWAADIHITPDGRHLYACDRTASVITVFTVSEDGSVLAVQGHQPTETQPRGFNIDNSGQYLIAAGQKSHHIAVYGIEGEQGLLAEKGRYAVGQGPMWVVINAFDA</sequence>
<dbReference type="EC" id="3.1.1.31" evidence="1"/>
<dbReference type="EMBL" id="CP000783">
    <property type="protein sequence ID" value="ABU77822.1"/>
    <property type="molecule type" value="Genomic_DNA"/>
</dbReference>
<dbReference type="RefSeq" id="WP_007888520.1">
    <property type="nucleotide sequence ID" value="NC_009778.1"/>
</dbReference>
<dbReference type="SMR" id="A7MIZ2"/>
<dbReference type="GeneID" id="56731377"/>
<dbReference type="KEGG" id="esa:ESA_02577"/>
<dbReference type="HOGENOM" id="CLU_038716_2_0_6"/>
<dbReference type="UniPathway" id="UPA00115">
    <property type="reaction ID" value="UER00409"/>
</dbReference>
<dbReference type="Proteomes" id="UP000000260">
    <property type="component" value="Chromosome"/>
</dbReference>
<dbReference type="GO" id="GO:0005829">
    <property type="term" value="C:cytosol"/>
    <property type="evidence" value="ECO:0007669"/>
    <property type="project" value="TreeGrafter"/>
</dbReference>
<dbReference type="GO" id="GO:0017057">
    <property type="term" value="F:6-phosphogluconolactonase activity"/>
    <property type="evidence" value="ECO:0007669"/>
    <property type="project" value="UniProtKB-UniRule"/>
</dbReference>
<dbReference type="GO" id="GO:0006006">
    <property type="term" value="P:glucose metabolic process"/>
    <property type="evidence" value="ECO:0007669"/>
    <property type="project" value="UniProtKB-KW"/>
</dbReference>
<dbReference type="GO" id="GO:0009051">
    <property type="term" value="P:pentose-phosphate shunt, oxidative branch"/>
    <property type="evidence" value="ECO:0007669"/>
    <property type="project" value="UniProtKB-UniRule"/>
</dbReference>
<dbReference type="FunFam" id="2.130.10.10:FF:000051">
    <property type="entry name" value="6-phosphogluconolactonase"/>
    <property type="match status" value="1"/>
</dbReference>
<dbReference type="Gene3D" id="2.130.10.10">
    <property type="entry name" value="YVTN repeat-like/Quinoprotein amine dehydrogenase"/>
    <property type="match status" value="1"/>
</dbReference>
<dbReference type="HAMAP" id="MF_01605">
    <property type="entry name" value="6P_gluconolactonase"/>
    <property type="match status" value="1"/>
</dbReference>
<dbReference type="InterPro" id="IPR022528">
    <property type="entry name" value="6-phosphogluconolactonase_YbhE"/>
</dbReference>
<dbReference type="InterPro" id="IPR050282">
    <property type="entry name" value="Cycloisomerase_2"/>
</dbReference>
<dbReference type="InterPro" id="IPR019405">
    <property type="entry name" value="Lactonase_7-beta_prop"/>
</dbReference>
<dbReference type="InterPro" id="IPR011045">
    <property type="entry name" value="N2O_reductase_N"/>
</dbReference>
<dbReference type="InterPro" id="IPR015943">
    <property type="entry name" value="WD40/YVTN_repeat-like_dom_sf"/>
</dbReference>
<dbReference type="NCBIfam" id="NF008258">
    <property type="entry name" value="PRK11028.1"/>
    <property type="match status" value="1"/>
</dbReference>
<dbReference type="PANTHER" id="PTHR30344:SF1">
    <property type="entry name" value="6-PHOSPHOGLUCONOLACTONASE"/>
    <property type="match status" value="1"/>
</dbReference>
<dbReference type="PANTHER" id="PTHR30344">
    <property type="entry name" value="6-PHOSPHOGLUCONOLACTONASE-RELATED"/>
    <property type="match status" value="1"/>
</dbReference>
<dbReference type="Pfam" id="PF10282">
    <property type="entry name" value="Lactonase"/>
    <property type="match status" value="1"/>
</dbReference>
<dbReference type="SUPFAM" id="SSF50974">
    <property type="entry name" value="Nitrous oxide reductase, N-terminal domain"/>
    <property type="match status" value="1"/>
</dbReference>
<evidence type="ECO:0000255" key="1">
    <source>
        <dbReference type="HAMAP-Rule" id="MF_01605"/>
    </source>
</evidence>
<name>6PGL_CROS8</name>
<keyword id="KW-0119">Carbohydrate metabolism</keyword>
<keyword id="KW-0313">Glucose metabolism</keyword>
<keyword id="KW-0378">Hydrolase</keyword>
<keyword id="KW-1185">Reference proteome</keyword>
<proteinExistence type="inferred from homology"/>
<accession>A7MIZ2</accession>
<organism>
    <name type="scientific">Cronobacter sakazakii (strain ATCC BAA-894)</name>
    <name type="common">Enterobacter sakazakii</name>
    <dbReference type="NCBI Taxonomy" id="290339"/>
    <lineage>
        <taxon>Bacteria</taxon>
        <taxon>Pseudomonadati</taxon>
        <taxon>Pseudomonadota</taxon>
        <taxon>Gammaproteobacteria</taxon>
        <taxon>Enterobacterales</taxon>
        <taxon>Enterobacteriaceae</taxon>
        <taxon>Cronobacter</taxon>
    </lineage>
</organism>